<sequence>MNRLKKLKKIRLHREGTSILIVSAILLIGINALLFWGIECKIPFYIFATASIVVYLLMVNFFRCPIRLFEHDTEKIVVAPADGRIVVIEEVDEHEYFHDRRLMISIFMSIVNVHANWYPVDGVVKHVDHHNGKFMKAWLPKASTENERSMVVIETPEGHTVMARQIAGAIARRIVTYAEVGEDCYIDEHMGFIKFGSRVDVYLPLGTEVCVKMGQATVGNETVIAKLK</sequence>
<organism>
    <name type="scientific">Phocaeicola vulgatus (strain ATCC 8482 / DSM 1447 / JCM 5826 / CCUG 4940 / NBRC 14291 / NCTC 11154)</name>
    <name type="common">Bacteroides vulgatus</name>
    <dbReference type="NCBI Taxonomy" id="435590"/>
    <lineage>
        <taxon>Bacteria</taxon>
        <taxon>Pseudomonadati</taxon>
        <taxon>Bacteroidota</taxon>
        <taxon>Bacteroidia</taxon>
        <taxon>Bacteroidales</taxon>
        <taxon>Bacteroidaceae</taxon>
        <taxon>Phocaeicola</taxon>
    </lineage>
</organism>
<proteinExistence type="inferred from homology"/>
<comment type="function">
    <text evidence="1">Catalyzes the formation of phosphatidylethanolamine (PtdEtn) from phosphatidylserine (PtdSer).</text>
</comment>
<comment type="catalytic activity">
    <reaction evidence="1">
        <text>a 1,2-diacyl-sn-glycero-3-phospho-L-serine + H(+) = a 1,2-diacyl-sn-glycero-3-phosphoethanolamine + CO2</text>
        <dbReference type="Rhea" id="RHEA:20828"/>
        <dbReference type="ChEBI" id="CHEBI:15378"/>
        <dbReference type="ChEBI" id="CHEBI:16526"/>
        <dbReference type="ChEBI" id="CHEBI:57262"/>
        <dbReference type="ChEBI" id="CHEBI:64612"/>
        <dbReference type="EC" id="4.1.1.65"/>
    </reaction>
</comment>
<comment type="cofactor">
    <cofactor evidence="1">
        <name>pyruvate</name>
        <dbReference type="ChEBI" id="CHEBI:15361"/>
    </cofactor>
    <text evidence="1">Binds 1 pyruvoyl group covalently per subunit.</text>
</comment>
<comment type="pathway">
    <text evidence="1">Phospholipid metabolism; phosphatidylethanolamine biosynthesis; phosphatidylethanolamine from CDP-diacylglycerol: step 2/2.</text>
</comment>
<comment type="subunit">
    <text evidence="1">Heterodimer of a large membrane-associated beta subunit and a small pyruvoyl-containing alpha subunit.</text>
</comment>
<comment type="subcellular location">
    <subcellularLocation>
        <location evidence="1">Cell membrane</location>
        <topology evidence="1">Peripheral membrane protein</topology>
    </subcellularLocation>
</comment>
<comment type="PTM">
    <text evidence="1">Is synthesized initially as an inactive proenzyme. Formation of the active enzyme involves a self-maturation process in which the active site pyruvoyl group is generated from an internal serine residue via an autocatalytic post-translational modification. Two non-identical subunits are generated from the proenzyme in this reaction, and the pyruvate is formed at the N-terminus of the alpha chain, which is derived from the carboxyl end of the proenzyme. The post-translation cleavage follows an unusual pathway, termed non-hydrolytic serinolysis, in which the side chain hydroxyl group of the serine supplies its oxygen atom to form the C-terminus of the beta chain, while the remainder of the serine residue undergoes an oxidative deamination to produce ammonia and the pyruvoyl prosthetic group on the alpha chain.</text>
</comment>
<comment type="similarity">
    <text evidence="1">Belongs to the phosphatidylserine decarboxylase family. PSD-A subfamily.</text>
</comment>
<gene>
    <name evidence="1" type="primary">psd</name>
    <name type="ordered locus">BVU_1884</name>
</gene>
<dbReference type="EC" id="4.1.1.65" evidence="1"/>
<dbReference type="EMBL" id="CP000139">
    <property type="protein sequence ID" value="ABR39559.1"/>
    <property type="molecule type" value="Genomic_DNA"/>
</dbReference>
<dbReference type="RefSeq" id="WP_005849101.1">
    <property type="nucleotide sequence ID" value="NZ_JANSWM010000118.1"/>
</dbReference>
<dbReference type="STRING" id="435590.BVU_1884"/>
<dbReference type="PaxDb" id="435590-BVU_1884"/>
<dbReference type="GeneID" id="5302850"/>
<dbReference type="KEGG" id="bvu:BVU_1884"/>
<dbReference type="eggNOG" id="COG0688">
    <property type="taxonomic scope" value="Bacteria"/>
</dbReference>
<dbReference type="HOGENOM" id="CLU_072492_1_0_10"/>
<dbReference type="BioCyc" id="BVUL435590:G1G59-1973-MONOMER"/>
<dbReference type="UniPathway" id="UPA00558">
    <property type="reaction ID" value="UER00616"/>
</dbReference>
<dbReference type="Proteomes" id="UP000002861">
    <property type="component" value="Chromosome"/>
</dbReference>
<dbReference type="GO" id="GO:0005886">
    <property type="term" value="C:plasma membrane"/>
    <property type="evidence" value="ECO:0007669"/>
    <property type="project" value="UniProtKB-SubCell"/>
</dbReference>
<dbReference type="GO" id="GO:0004609">
    <property type="term" value="F:phosphatidylserine decarboxylase activity"/>
    <property type="evidence" value="ECO:0007669"/>
    <property type="project" value="UniProtKB-UniRule"/>
</dbReference>
<dbReference type="GO" id="GO:0006646">
    <property type="term" value="P:phosphatidylethanolamine biosynthetic process"/>
    <property type="evidence" value="ECO:0007669"/>
    <property type="project" value="UniProtKB-UniRule"/>
</dbReference>
<dbReference type="HAMAP" id="MF_00664">
    <property type="entry name" value="PS_decarb_PSD_A"/>
    <property type="match status" value="1"/>
</dbReference>
<dbReference type="InterPro" id="IPR003817">
    <property type="entry name" value="PS_Dcarbxylase"/>
</dbReference>
<dbReference type="InterPro" id="IPR033175">
    <property type="entry name" value="PSD-A"/>
</dbReference>
<dbReference type="NCBIfam" id="NF003678">
    <property type="entry name" value="PRK05305.1-2"/>
    <property type="match status" value="1"/>
</dbReference>
<dbReference type="PANTHER" id="PTHR35809">
    <property type="entry name" value="ARCHAETIDYLSERINE DECARBOXYLASE PROENZYME-RELATED"/>
    <property type="match status" value="1"/>
</dbReference>
<dbReference type="PANTHER" id="PTHR35809:SF1">
    <property type="entry name" value="ARCHAETIDYLSERINE DECARBOXYLASE PROENZYME-RELATED"/>
    <property type="match status" value="1"/>
</dbReference>
<dbReference type="Pfam" id="PF02666">
    <property type="entry name" value="PS_Dcarbxylase"/>
    <property type="match status" value="1"/>
</dbReference>
<name>PSD_PHOV8</name>
<protein>
    <recommendedName>
        <fullName evidence="1">Phosphatidylserine decarboxylase proenzyme</fullName>
        <ecNumber evidence="1">4.1.1.65</ecNumber>
    </recommendedName>
    <component>
        <recommendedName>
            <fullName evidence="1">Phosphatidylserine decarboxylase alpha chain</fullName>
        </recommendedName>
    </component>
    <component>
        <recommendedName>
            <fullName evidence="1">Phosphatidylserine decarboxylase beta chain</fullName>
        </recommendedName>
    </component>
</protein>
<accession>A6L1J5</accession>
<reference key="1">
    <citation type="journal article" date="2007" name="PLoS Biol.">
        <title>Evolution of symbiotic bacteria in the distal human intestine.</title>
        <authorList>
            <person name="Xu J."/>
            <person name="Mahowald M.A."/>
            <person name="Ley R.E."/>
            <person name="Lozupone C.A."/>
            <person name="Hamady M."/>
            <person name="Martens E.C."/>
            <person name="Henrissat B."/>
            <person name="Coutinho P.M."/>
            <person name="Minx P."/>
            <person name="Latreille P."/>
            <person name="Cordum H."/>
            <person name="Van Brunt A."/>
            <person name="Kim K."/>
            <person name="Fulton R.S."/>
            <person name="Fulton L.A."/>
            <person name="Clifton S.W."/>
            <person name="Wilson R.K."/>
            <person name="Knight R.D."/>
            <person name="Gordon J.I."/>
        </authorList>
    </citation>
    <scope>NUCLEOTIDE SEQUENCE [LARGE SCALE GENOMIC DNA]</scope>
    <source>
        <strain>ATCC 8482 / DSM 1447 / JCM 5826 / CCUG 4940 / NBRC 14291 / NCTC 11154</strain>
    </source>
</reference>
<keyword id="KW-1003">Cell membrane</keyword>
<keyword id="KW-0210">Decarboxylase</keyword>
<keyword id="KW-0444">Lipid biosynthesis</keyword>
<keyword id="KW-0443">Lipid metabolism</keyword>
<keyword id="KW-0456">Lyase</keyword>
<keyword id="KW-0472">Membrane</keyword>
<keyword id="KW-0594">Phospholipid biosynthesis</keyword>
<keyword id="KW-1208">Phospholipid metabolism</keyword>
<keyword id="KW-0670">Pyruvate</keyword>
<keyword id="KW-0865">Zymogen</keyword>
<feature type="chain" id="PRO_1000026622" description="Phosphatidylserine decarboxylase beta chain" evidence="1">
    <location>
        <begin position="1"/>
        <end position="196"/>
    </location>
</feature>
<feature type="chain" id="PRO_1000026623" description="Phosphatidylserine decarboxylase alpha chain" evidence="1">
    <location>
        <begin position="197"/>
        <end position="228"/>
    </location>
</feature>
<feature type="active site" description="Schiff-base intermediate with substrate; via pyruvic acid" evidence="1">
    <location>
        <position position="197"/>
    </location>
</feature>
<feature type="site" description="Cleavage (non-hydrolytic); by autocatalysis" evidence="1">
    <location>
        <begin position="196"/>
        <end position="197"/>
    </location>
</feature>
<feature type="modified residue" description="Pyruvic acid (Ser); by autocatalysis" evidence="1">
    <location>
        <position position="197"/>
    </location>
</feature>
<evidence type="ECO:0000255" key="1">
    <source>
        <dbReference type="HAMAP-Rule" id="MF_00664"/>
    </source>
</evidence>